<reference evidence="11" key="1">
    <citation type="journal article" date="2013" name="Nature">
        <title>The zebrafish reference genome sequence and its relationship to the human genome.</title>
        <authorList>
            <person name="Howe K."/>
            <person name="Clark M.D."/>
            <person name="Torroja C.F."/>
            <person name="Torrance J."/>
            <person name="Berthelot C."/>
            <person name="Muffato M."/>
            <person name="Collins J.E."/>
            <person name="Humphray S."/>
            <person name="McLaren K."/>
            <person name="Matthews L."/>
            <person name="McLaren S."/>
            <person name="Sealy I."/>
            <person name="Caccamo M."/>
            <person name="Churcher C."/>
            <person name="Scott C."/>
            <person name="Barrett J.C."/>
            <person name="Koch R."/>
            <person name="Rauch G.J."/>
            <person name="White S."/>
            <person name="Chow W."/>
            <person name="Kilian B."/>
            <person name="Quintais L.T."/>
            <person name="Guerra-Assuncao J.A."/>
            <person name="Zhou Y."/>
            <person name="Gu Y."/>
            <person name="Yen J."/>
            <person name="Vogel J.H."/>
            <person name="Eyre T."/>
            <person name="Redmond S."/>
            <person name="Banerjee R."/>
            <person name="Chi J."/>
            <person name="Fu B."/>
            <person name="Langley E."/>
            <person name="Maguire S.F."/>
            <person name="Laird G.K."/>
            <person name="Lloyd D."/>
            <person name="Kenyon E."/>
            <person name="Donaldson S."/>
            <person name="Sehra H."/>
            <person name="Almeida-King J."/>
            <person name="Loveland J."/>
            <person name="Trevanion S."/>
            <person name="Jones M."/>
            <person name="Quail M."/>
            <person name="Willey D."/>
            <person name="Hunt A."/>
            <person name="Burton J."/>
            <person name="Sims S."/>
            <person name="McLay K."/>
            <person name="Plumb B."/>
            <person name="Davis J."/>
            <person name="Clee C."/>
            <person name="Oliver K."/>
            <person name="Clark R."/>
            <person name="Riddle C."/>
            <person name="Elliot D."/>
            <person name="Threadgold G."/>
            <person name="Harden G."/>
            <person name="Ware D."/>
            <person name="Begum S."/>
            <person name="Mortimore B."/>
            <person name="Kerry G."/>
            <person name="Heath P."/>
            <person name="Phillimore B."/>
            <person name="Tracey A."/>
            <person name="Corby N."/>
            <person name="Dunn M."/>
            <person name="Johnson C."/>
            <person name="Wood J."/>
            <person name="Clark S."/>
            <person name="Pelan S."/>
            <person name="Griffiths G."/>
            <person name="Smith M."/>
            <person name="Glithero R."/>
            <person name="Howden P."/>
            <person name="Barker N."/>
            <person name="Lloyd C."/>
            <person name="Stevens C."/>
            <person name="Harley J."/>
            <person name="Holt K."/>
            <person name="Panagiotidis G."/>
            <person name="Lovell J."/>
            <person name="Beasley H."/>
            <person name="Henderson C."/>
            <person name="Gordon D."/>
            <person name="Auger K."/>
            <person name="Wright D."/>
            <person name="Collins J."/>
            <person name="Raisen C."/>
            <person name="Dyer L."/>
            <person name="Leung K."/>
            <person name="Robertson L."/>
            <person name="Ambridge K."/>
            <person name="Leongamornlert D."/>
            <person name="McGuire S."/>
            <person name="Gilderthorp R."/>
            <person name="Griffiths C."/>
            <person name="Manthravadi D."/>
            <person name="Nichol S."/>
            <person name="Barker G."/>
            <person name="Whitehead S."/>
            <person name="Kay M."/>
            <person name="Brown J."/>
            <person name="Murnane C."/>
            <person name="Gray E."/>
            <person name="Humphries M."/>
            <person name="Sycamore N."/>
            <person name="Barker D."/>
            <person name="Saunders D."/>
            <person name="Wallis J."/>
            <person name="Babbage A."/>
            <person name="Hammond S."/>
            <person name="Mashreghi-Mohammadi M."/>
            <person name="Barr L."/>
            <person name="Martin S."/>
            <person name="Wray P."/>
            <person name="Ellington A."/>
            <person name="Matthews N."/>
            <person name="Ellwood M."/>
            <person name="Woodmansey R."/>
            <person name="Clark G."/>
            <person name="Cooper J."/>
            <person name="Tromans A."/>
            <person name="Grafham D."/>
            <person name="Skuce C."/>
            <person name="Pandian R."/>
            <person name="Andrews R."/>
            <person name="Harrison E."/>
            <person name="Kimberley A."/>
            <person name="Garnett J."/>
            <person name="Fosker N."/>
            <person name="Hall R."/>
            <person name="Garner P."/>
            <person name="Kelly D."/>
            <person name="Bird C."/>
            <person name="Palmer S."/>
            <person name="Gehring I."/>
            <person name="Berger A."/>
            <person name="Dooley C.M."/>
            <person name="Ersan-Urun Z."/>
            <person name="Eser C."/>
            <person name="Geiger H."/>
            <person name="Geisler M."/>
            <person name="Karotki L."/>
            <person name="Kirn A."/>
            <person name="Konantz J."/>
            <person name="Konantz M."/>
            <person name="Oberlander M."/>
            <person name="Rudolph-Geiger S."/>
            <person name="Teucke M."/>
            <person name="Lanz C."/>
            <person name="Raddatz G."/>
            <person name="Osoegawa K."/>
            <person name="Zhu B."/>
            <person name="Rapp A."/>
            <person name="Widaa S."/>
            <person name="Langford C."/>
            <person name="Yang F."/>
            <person name="Schuster S.C."/>
            <person name="Carter N.P."/>
            <person name="Harrow J."/>
            <person name="Ning Z."/>
            <person name="Herrero J."/>
            <person name="Searle S.M."/>
            <person name="Enright A."/>
            <person name="Geisler R."/>
            <person name="Plasterk R.H."/>
            <person name="Lee C."/>
            <person name="Westerfield M."/>
            <person name="de Jong P.J."/>
            <person name="Zon L.I."/>
            <person name="Postlethwait J.H."/>
            <person name="Nusslein-Volhard C."/>
            <person name="Hubbard T.J."/>
            <person name="Roest Crollius H."/>
            <person name="Rogers J."/>
            <person name="Stemple D.L."/>
        </authorList>
    </citation>
    <scope>NUCLEOTIDE SEQUENCE [LARGE SCALE GENOMIC DNA]</scope>
    <source>
        <strain evidence="11">Tuebingen</strain>
    </source>
</reference>
<reference evidence="10" key="2">
    <citation type="journal article" date="2015" name="Cell Rep.">
        <title>A Floor-Plate Extracellular Protein-Protein Interaction Screen Identifies Draxin as a Secreted Netrin-1 Antagonist.</title>
        <authorList>
            <person name="Gao X."/>
            <person name="Metzger U."/>
            <person name="Panza P."/>
            <person name="Mahalwar P."/>
            <person name="Alsheimer S."/>
            <person name="Geiger H."/>
            <person name="Maischein H.M."/>
            <person name="Levesque M.P."/>
            <person name="Templin M."/>
            <person name="Sollner C."/>
        </authorList>
    </citation>
    <scope>NUCLEOTIDE SEQUENCE [MRNA] OF 1-849</scope>
</reference>
<reference evidence="9" key="3">
    <citation type="journal article" date="2012" name="Neurogenetics">
        <title>Mutations in the satellite cell gene MEGF10 cause a recessive congenital myopathy with minicores.</title>
        <authorList>
            <person name="Boyden S.E."/>
            <person name="Mahoney L.J."/>
            <person name="Kawahara G."/>
            <person name="Myers J.A."/>
            <person name="Mitsuhashi S."/>
            <person name="Estrella E.A."/>
            <person name="Duncan A.R."/>
            <person name="Dey F."/>
            <person name="Dechene E.T."/>
            <person name="Blasko-Goehringer J.M."/>
            <person name="Bonnemann C.G."/>
            <person name="Darras B.T."/>
            <person name="Mendell J.R."/>
            <person name="Lidov H.G."/>
            <person name="Nishino I."/>
            <person name="Beggs A.H."/>
            <person name="Kunkel L.M."/>
            <person name="Kang P.B."/>
        </authorList>
    </citation>
    <scope>FUNCTION</scope>
    <scope>DISRUPTION PHENOTYPE</scope>
</reference>
<reference evidence="9" key="4">
    <citation type="journal article" date="2019" name="Hum. Mol. Genet.">
        <title>Selective serotonin reuptake inhibitors ameliorate MEGF10 myopathy.</title>
        <authorList>
            <person name="Saha M."/>
            <person name="Rizzo S.A."/>
            <person name="Ramanathan M."/>
            <person name="Hightower R.M."/>
            <person name="Santostefano K.E."/>
            <person name="Terada N."/>
            <person name="Finkel R.S."/>
            <person name="Berg J.S."/>
            <person name="Chahin N."/>
            <person name="Pacak C.A."/>
            <person name="Wagner R.E."/>
            <person name="Alexander M.S."/>
            <person name="Draper I."/>
            <person name="Kang P.B."/>
        </authorList>
    </citation>
    <scope>FUNCTION</scope>
    <scope>MUTAGENESIS OF 110-CYS--LYS-1119</scope>
</reference>
<keyword id="KW-0130">Cell adhesion</keyword>
<keyword id="KW-1003">Cell membrane</keyword>
<keyword id="KW-1015">Disulfide bond</keyword>
<keyword id="KW-0245">EGF-like domain</keyword>
<keyword id="KW-0325">Glycoprotein</keyword>
<keyword id="KW-0424">Laminin EGF-like domain</keyword>
<keyword id="KW-0472">Membrane</keyword>
<keyword id="KW-0517">Myogenesis</keyword>
<keyword id="KW-0581">Phagocytosis</keyword>
<keyword id="KW-1185">Reference proteome</keyword>
<keyword id="KW-0677">Repeat</keyword>
<keyword id="KW-0732">Signal</keyword>
<keyword id="KW-0812">Transmembrane</keyword>
<keyword id="KW-1133">Transmembrane helix</keyword>
<evidence type="ECO:0000250" key="1">
    <source>
        <dbReference type="UniProtKB" id="Q96KG7"/>
    </source>
</evidence>
<evidence type="ECO:0000255" key="2"/>
<evidence type="ECO:0000255" key="3">
    <source>
        <dbReference type="PROSITE-ProRule" id="PRU00076"/>
    </source>
</evidence>
<evidence type="ECO:0000255" key="4">
    <source>
        <dbReference type="PROSITE-ProRule" id="PRU00384"/>
    </source>
</evidence>
<evidence type="ECO:0000255" key="5">
    <source>
        <dbReference type="PROSITE-ProRule" id="PRU00498"/>
    </source>
</evidence>
<evidence type="ECO:0000269" key="6">
    <source>
    </source>
</evidence>
<evidence type="ECO:0000269" key="7">
    <source ref="4"/>
</evidence>
<evidence type="ECO:0000303" key="8">
    <source>
    </source>
</evidence>
<evidence type="ECO:0000305" key="9"/>
<evidence type="ECO:0000312" key="10">
    <source>
        <dbReference type="EMBL" id="AJG06078.1"/>
    </source>
</evidence>
<evidence type="ECO:0000312" key="11">
    <source>
        <dbReference type="Proteomes" id="UP000000437"/>
    </source>
</evidence>
<dbReference type="EMBL" id="CR396586">
    <property type="status" value="NOT_ANNOTATED_CDS"/>
    <property type="molecule type" value="Genomic_DNA"/>
</dbReference>
<dbReference type="EMBL" id="KM655732">
    <property type="protein sequence ID" value="AJG06078.1"/>
    <property type="molecule type" value="mRNA"/>
</dbReference>
<dbReference type="SMR" id="E9QJQ6"/>
<dbReference type="FunCoup" id="E9QJQ6">
    <property type="interactions" value="796"/>
</dbReference>
<dbReference type="STRING" id="7955.ENSDARP00000151927"/>
<dbReference type="GlyCosmos" id="E9QJQ6">
    <property type="glycosylation" value="9 sites, No reported glycans"/>
</dbReference>
<dbReference type="PaxDb" id="7955-ENSDARP00000129223"/>
<dbReference type="Ensembl" id="ENSDART00000043936">
    <property type="protein sequence ID" value="ENSDARP00000043935"/>
    <property type="gene ID" value="ENSDARG00000017229"/>
</dbReference>
<dbReference type="InParanoid" id="E9QJQ6"/>
<dbReference type="PhylomeDB" id="E9QJQ6"/>
<dbReference type="TreeFam" id="TF332598"/>
<dbReference type="PRO" id="PR:E9QJQ6"/>
<dbReference type="Proteomes" id="UP000000437">
    <property type="component" value="Unplaced"/>
</dbReference>
<dbReference type="Bgee" id="ENSDARG00000017229">
    <property type="expression patterns" value="Expressed in retina and 10 other cell types or tissues"/>
</dbReference>
<dbReference type="ExpressionAtlas" id="E9QJQ6">
    <property type="expression patterns" value="baseline"/>
</dbReference>
<dbReference type="GO" id="GO:0005886">
    <property type="term" value="C:plasma membrane"/>
    <property type="evidence" value="ECO:0007669"/>
    <property type="project" value="UniProtKB-SubCell"/>
</dbReference>
<dbReference type="GO" id="GO:0043277">
    <property type="term" value="P:apoptotic cell clearance"/>
    <property type="evidence" value="ECO:0000318"/>
    <property type="project" value="GO_Central"/>
</dbReference>
<dbReference type="GO" id="GO:0007155">
    <property type="term" value="P:cell adhesion"/>
    <property type="evidence" value="ECO:0007669"/>
    <property type="project" value="UniProtKB-KW"/>
</dbReference>
<dbReference type="GO" id="GO:0007517">
    <property type="term" value="P:muscle organ development"/>
    <property type="evidence" value="ECO:0007669"/>
    <property type="project" value="UniProtKB-KW"/>
</dbReference>
<dbReference type="GO" id="GO:0030239">
    <property type="term" value="P:myofibril assembly"/>
    <property type="evidence" value="ECO:0000315"/>
    <property type="project" value="ZFIN"/>
</dbReference>
<dbReference type="GO" id="GO:1901863">
    <property type="term" value="P:positive regulation of muscle tissue development"/>
    <property type="evidence" value="ECO:0000315"/>
    <property type="project" value="UniProtKB"/>
</dbReference>
<dbReference type="CDD" id="cd00055">
    <property type="entry name" value="EGF_Lam"/>
    <property type="match status" value="1"/>
</dbReference>
<dbReference type="FunFam" id="2.170.300.10:FF:000014">
    <property type="entry name" value="Multiple epidermal growth factor-like domains protein 10"/>
    <property type="match status" value="1"/>
</dbReference>
<dbReference type="FunFam" id="2.170.300.10:FF:000007">
    <property type="entry name" value="multiple epidermal growth factor-like domains protein 10"/>
    <property type="match status" value="1"/>
</dbReference>
<dbReference type="FunFam" id="2.10.25.10:FF:000114">
    <property type="entry name" value="Multiple epidermal growth factor-like domains protein 11"/>
    <property type="match status" value="1"/>
</dbReference>
<dbReference type="FunFam" id="2.170.300.10:FF:000006">
    <property type="entry name" value="Multiple epidermal growth factor-like domains protein 11"/>
    <property type="match status" value="1"/>
</dbReference>
<dbReference type="FunFam" id="2.170.300.10:FF:000005">
    <property type="entry name" value="multiple epidermal growth factor-like domains protein 11"/>
    <property type="match status" value="1"/>
</dbReference>
<dbReference type="Gene3D" id="2.10.25.10">
    <property type="entry name" value="Laminin"/>
    <property type="match status" value="1"/>
</dbReference>
<dbReference type="Gene3D" id="2.170.300.10">
    <property type="entry name" value="Tie2 ligand-binding domain superfamily"/>
    <property type="match status" value="5"/>
</dbReference>
<dbReference type="InterPro" id="IPR013032">
    <property type="entry name" value="EGF-like_CS"/>
</dbReference>
<dbReference type="InterPro" id="IPR000742">
    <property type="entry name" value="EGF-like_dom"/>
</dbReference>
<dbReference type="InterPro" id="IPR057138">
    <property type="entry name" value="EGF_PEAR1L-like"/>
</dbReference>
<dbReference type="InterPro" id="IPR011489">
    <property type="entry name" value="EMI_domain"/>
</dbReference>
<dbReference type="InterPro" id="IPR002049">
    <property type="entry name" value="LE_dom"/>
</dbReference>
<dbReference type="InterPro" id="IPR052485">
    <property type="entry name" value="MEGF_diff_regulators"/>
</dbReference>
<dbReference type="PANTHER" id="PTHR24052">
    <property type="entry name" value="DELTA-RELATED"/>
    <property type="match status" value="1"/>
</dbReference>
<dbReference type="PANTHER" id="PTHR24052:SF8">
    <property type="entry name" value="NIMROD A, ISOFORM E"/>
    <property type="match status" value="1"/>
</dbReference>
<dbReference type="Pfam" id="PF00053">
    <property type="entry name" value="EGF_laminin"/>
    <property type="match status" value="4"/>
</dbReference>
<dbReference type="Pfam" id="PF23301">
    <property type="entry name" value="EGF_PEAR1L"/>
    <property type="match status" value="1"/>
</dbReference>
<dbReference type="Pfam" id="PF12661">
    <property type="entry name" value="hEGF"/>
    <property type="match status" value="4"/>
</dbReference>
<dbReference type="PRINTS" id="PR00011">
    <property type="entry name" value="EGFLAMININ"/>
</dbReference>
<dbReference type="SMART" id="SM00181">
    <property type="entry name" value="EGF"/>
    <property type="match status" value="17"/>
</dbReference>
<dbReference type="SMART" id="SM00180">
    <property type="entry name" value="EGF_Lam"/>
    <property type="match status" value="14"/>
</dbReference>
<dbReference type="PROSITE" id="PS00022">
    <property type="entry name" value="EGF_1"/>
    <property type="match status" value="16"/>
</dbReference>
<dbReference type="PROSITE" id="PS01186">
    <property type="entry name" value="EGF_2"/>
    <property type="match status" value="17"/>
</dbReference>
<dbReference type="PROSITE" id="PS50026">
    <property type="entry name" value="EGF_3"/>
    <property type="match status" value="15"/>
</dbReference>
<dbReference type="PROSITE" id="PS51041">
    <property type="entry name" value="EMI"/>
    <property type="match status" value="1"/>
</dbReference>
<gene>
    <name evidence="8" type="primary">megf10</name>
</gene>
<organism evidence="11">
    <name type="scientific">Danio rerio</name>
    <name type="common">Zebrafish</name>
    <name type="synonym">Brachydanio rerio</name>
    <dbReference type="NCBI Taxonomy" id="7955"/>
    <lineage>
        <taxon>Eukaryota</taxon>
        <taxon>Metazoa</taxon>
        <taxon>Chordata</taxon>
        <taxon>Craniata</taxon>
        <taxon>Vertebrata</taxon>
        <taxon>Euteleostomi</taxon>
        <taxon>Actinopterygii</taxon>
        <taxon>Neopterygii</taxon>
        <taxon>Teleostei</taxon>
        <taxon>Ostariophysi</taxon>
        <taxon>Cypriniformes</taxon>
        <taxon>Danionidae</taxon>
        <taxon>Danioninae</taxon>
        <taxon>Danio</taxon>
    </lineage>
</organism>
<accession>E9QJQ6</accession>
<accession>A0A0B5JFJ1</accession>
<protein>
    <recommendedName>
        <fullName evidence="8">Multiple epidermal growth factor-like domains protein 10</fullName>
        <shortName evidence="9">Multiple EGF-like domains protein 10</shortName>
    </recommendedName>
</protein>
<sequence>MMSSCGPLLLAVSCCLVALTSSLNLDDPNVCSHWESYSVTVQETYAHPFDQIYYTSCTDILNWFKCTQHRVSYRTAYRRGEKTMHRRKSQCCPGFYESGDICVPHCAEKCVHGRCVAPNTCQCEPGWGGADCSSACDRDHWGPHCSSRCQCKNEALCNPITGACICAPGYHGWRCEDLCDHSTYGNNCQQKCLCQNNATCHHITGECVCSPGYTGAFCEDLCPPGKHGQQCEERCPCQNGGVCHHVTGECSCPAGWGMVCGQPCPTGRFGKNCSQECQCHNGGICSPSTGQCVCSSGYTGERCQDQCQVGTYGIGCSQACRCVNGAQCYHVSGACLCEQGYTGESCEERICPDGQYGLKCDRKCPCNTNNTRSCHPMSGECSCQSGWSGLYCNETCAPGFYGEACQEVCRCQNGADCHSVSGECICAPGYKGSDCAIACPPGTYGINCTSLCSCKNGAICSPIDGSCSCQAGWHGVDCSINCPSGTWGLGCNLSCVCGNGGACNALDGKCTCTPGWRGDRCDQHCQDGTYGLDCRERCDCSHADGCHPSTGHCRCLAGWTGIHCDSVCAEGRWGPNCSLSCNCKNSASCSPDEGACECAPGFRGTTCQHICSPGVFGHRCSQACPHCVHSNGPCHHVTGQCECLPGFKGALCNEVCPSGKFGKNCGGSCTCTNNGTCSPMDGSCQCYPGWIGSDCSQPCPPGQWGPNCIHTCNCHNGAFCSAYDGECKCTAGWTGLYCTQRCPLGFYGKDCVQACQCENGADCNHISGQCTCRTGFMGRHCETKCPAGSYGYGCRQVCDCLNNSTCDHMTGTCYCNPGWKGTRCDQAGGNIAESPNSLTSAALPMDSYQIGAITGIIILVLLVLILLLLFIIYRKKQKGKESSMPSVTYTPTMRANTDYAIAESLPQTEVLPNSNYFSNPSYHTLTQCSSPPHINNIPYGKMNNNQLFVNLKNTEPRKRLSLLDHTGTLPADWKQGGSFSELGAYGVDRRYMGKSLRDLVKSLPYHASSCSLNSSENPYATIKDPPLLLTKSTECGYVEMKSPAHRDSPYAEIHSSSPANKNVYEVEPTISSVQALTNNNCNGPFCQDPYDLPKNSHIPCHYDLLPTRDSSPSPTEDSK</sequence>
<comment type="function">
    <text evidence="1 6 7">Membrane receptor involved in phagocytosis by macrophages and astrocytes of apoptotic cells (By similarity). Essential factor in the regulation of muscle development including myogenesis (PubMed:22371254, Ref.4). Likely plays a key role in muscle cell proliferation, adhesion and motility (PubMed:22371254, Ref.4). May control the balance between skeletal muscle satellite cells proliferation and differentiation through regulation of the notch signaling pathway (Ref.4).</text>
</comment>
<comment type="subcellular location">
    <subcellularLocation>
        <location evidence="1">Cell membrane</location>
        <topology evidence="9">Single-pass type I membrane protein</topology>
    </subcellularLocation>
</comment>
<comment type="disruption phenotype">
    <text evidence="6">Morpholino knockdown causes widespread disruption of myofibril organization and decreased muscle striation resulting in curled or bent tails, impaired swimming, and reduced motility in response to touch. Severely bent tails result from subtle abnormalities in somite boundaries and abundant gaps between myofibers.</text>
</comment>
<comment type="similarity">
    <text evidence="9">Belongs to the MEGF family.</text>
</comment>
<feature type="signal peptide" evidence="2">
    <location>
        <begin position="1"/>
        <end position="22"/>
    </location>
</feature>
<feature type="chain" id="PRO_5003244777" description="Multiple epidermal growth factor-like domains protein 10" evidence="2">
    <location>
        <begin position="23"/>
        <end position="1119"/>
    </location>
</feature>
<feature type="topological domain" description="Extracellular" evidence="9">
    <location>
        <begin position="23"/>
        <end position="851"/>
    </location>
</feature>
<feature type="transmembrane region" description="Helical" evidence="2">
    <location>
        <begin position="852"/>
        <end position="872"/>
    </location>
</feature>
<feature type="topological domain" description="Cytoplasmic" evidence="9">
    <location>
        <begin position="873"/>
        <end position="1119"/>
    </location>
</feature>
<feature type="domain" description="EMI" evidence="4">
    <location>
        <begin position="27"/>
        <end position="104"/>
    </location>
</feature>
<feature type="domain" description="EGF-like 1" evidence="3">
    <location>
        <begin position="98"/>
        <end position="133"/>
    </location>
</feature>
<feature type="domain" description="EGF-like 2" evidence="3">
    <location>
        <begin position="141"/>
        <end position="176"/>
    </location>
</feature>
<feature type="domain" description="EGF-like 3" evidence="3">
    <location>
        <begin position="184"/>
        <end position="219"/>
    </location>
</feature>
<feature type="domain" description="EGF-like 4" evidence="3">
    <location>
        <begin position="227"/>
        <end position="261"/>
    </location>
</feature>
<feature type="domain" description="EGF-like 5" evidence="3">
    <location>
        <begin position="274"/>
        <end position="304"/>
    </location>
</feature>
<feature type="domain" description="EGF-like 6" evidence="3">
    <location>
        <begin position="312"/>
        <end position="347"/>
    </location>
</feature>
<feature type="domain" description="EGF-like 7" evidence="3">
    <location>
        <begin position="401"/>
        <end position="436"/>
    </location>
</feature>
<feature type="domain" description="EGF-like 8" evidence="3">
    <location>
        <begin position="444"/>
        <end position="479"/>
    </location>
</feature>
<feature type="domain" description="EGF-like 9" evidence="3">
    <location>
        <begin position="487"/>
        <end position="522"/>
    </location>
</feature>
<feature type="domain" description="EGF-like 10" evidence="3">
    <location>
        <begin position="573"/>
        <end position="608"/>
    </location>
</feature>
<feature type="domain" description="EGF-like 11" evidence="3">
    <location>
        <begin position="616"/>
        <end position="653"/>
    </location>
</feature>
<feature type="domain" description="EGF-like 12" evidence="3">
    <location>
        <begin position="666"/>
        <end position="696"/>
    </location>
</feature>
<feature type="domain" description="EGF-like 13" evidence="3">
    <location>
        <begin position="709"/>
        <end position="739"/>
    </location>
</feature>
<feature type="domain" description="EGF-like 14" evidence="3">
    <location>
        <begin position="747"/>
        <end position="782"/>
    </location>
</feature>
<feature type="domain" description="EGF-like 15" evidence="3">
    <location>
        <begin position="795"/>
        <end position="825"/>
    </location>
</feature>
<feature type="glycosylation site" description="N-linked (GlcNAc...) asparagine" evidence="5">
    <location>
        <position position="197"/>
    </location>
</feature>
<feature type="glycosylation site" description="N-linked (GlcNAc...) asparagine" evidence="5">
    <location>
        <position position="272"/>
    </location>
</feature>
<feature type="glycosylation site" description="N-linked (GlcNAc...) asparagine" evidence="5">
    <location>
        <position position="369"/>
    </location>
</feature>
<feature type="glycosylation site" description="N-linked (GlcNAc...) asparagine" evidence="5">
    <location>
        <position position="393"/>
    </location>
</feature>
<feature type="glycosylation site" description="N-linked (GlcNAc...) asparagine" evidence="5">
    <location>
        <position position="447"/>
    </location>
</feature>
<feature type="glycosylation site" description="N-linked (GlcNAc...) asparagine" evidence="5">
    <location>
        <position position="492"/>
    </location>
</feature>
<feature type="glycosylation site" description="N-linked (GlcNAc...) asparagine" evidence="5">
    <location>
        <position position="576"/>
    </location>
</feature>
<feature type="glycosylation site" description="N-linked (GlcNAc...) asparagine" evidence="5">
    <location>
        <position position="674"/>
    </location>
</feature>
<feature type="glycosylation site" description="N-linked (GlcNAc...) asparagine" evidence="5">
    <location>
        <position position="803"/>
    </location>
</feature>
<feature type="disulfide bond" evidence="4">
    <location>
        <begin position="31"/>
        <end position="92"/>
    </location>
</feature>
<feature type="disulfide bond" evidence="4">
    <location>
        <begin position="57"/>
        <end position="66"/>
    </location>
</feature>
<feature type="disulfide bond" evidence="4">
    <location>
        <begin position="91"/>
        <end position="102"/>
    </location>
</feature>
<feature type="disulfide bond" evidence="3">
    <location>
        <begin position="102"/>
        <end position="115"/>
    </location>
</feature>
<feature type="disulfide bond" evidence="3">
    <location>
        <begin position="106"/>
        <end position="121"/>
    </location>
</feature>
<feature type="disulfide bond" evidence="3">
    <location>
        <begin position="123"/>
        <end position="132"/>
    </location>
</feature>
<feature type="disulfide bond" evidence="3">
    <location>
        <begin position="145"/>
        <end position="157"/>
    </location>
</feature>
<feature type="disulfide bond" evidence="3">
    <location>
        <begin position="151"/>
        <end position="164"/>
    </location>
</feature>
<feature type="disulfide bond" evidence="3">
    <location>
        <begin position="166"/>
        <end position="175"/>
    </location>
</feature>
<feature type="disulfide bond" evidence="3">
    <location>
        <begin position="188"/>
        <end position="200"/>
    </location>
</feature>
<feature type="disulfide bond" evidence="3">
    <location>
        <begin position="194"/>
        <end position="207"/>
    </location>
</feature>
<feature type="disulfide bond" evidence="3">
    <location>
        <begin position="209"/>
        <end position="218"/>
    </location>
</feature>
<feature type="disulfide bond" evidence="3">
    <location>
        <begin position="231"/>
        <end position="243"/>
    </location>
</feature>
<feature type="disulfide bond" evidence="3">
    <location>
        <begin position="237"/>
        <end position="250"/>
    </location>
</feature>
<feature type="disulfide bond" evidence="3">
    <location>
        <begin position="252"/>
        <end position="260"/>
    </location>
</feature>
<feature type="disulfide bond" evidence="3">
    <location>
        <begin position="277"/>
        <end position="285"/>
    </location>
</feature>
<feature type="disulfide bond" evidence="3">
    <location>
        <begin position="279"/>
        <end position="292"/>
    </location>
</feature>
<feature type="disulfide bond" evidence="3">
    <location>
        <begin position="294"/>
        <end position="303"/>
    </location>
</feature>
<feature type="disulfide bond" evidence="3">
    <location>
        <begin position="316"/>
        <end position="328"/>
    </location>
</feature>
<feature type="disulfide bond" evidence="3">
    <location>
        <begin position="322"/>
        <end position="335"/>
    </location>
</feature>
<feature type="disulfide bond" evidence="3">
    <location>
        <begin position="337"/>
        <end position="346"/>
    </location>
</feature>
<feature type="disulfide bond" evidence="3">
    <location>
        <begin position="405"/>
        <end position="417"/>
    </location>
</feature>
<feature type="disulfide bond" evidence="3">
    <location>
        <begin position="411"/>
        <end position="424"/>
    </location>
</feature>
<feature type="disulfide bond" evidence="3">
    <location>
        <begin position="426"/>
        <end position="435"/>
    </location>
</feature>
<feature type="disulfide bond" evidence="3">
    <location>
        <begin position="448"/>
        <end position="460"/>
    </location>
</feature>
<feature type="disulfide bond" evidence="3">
    <location>
        <begin position="454"/>
        <end position="467"/>
    </location>
</feature>
<feature type="disulfide bond" evidence="3">
    <location>
        <begin position="469"/>
        <end position="478"/>
    </location>
</feature>
<feature type="disulfide bond" evidence="3">
    <location>
        <begin position="491"/>
        <end position="503"/>
    </location>
</feature>
<feature type="disulfide bond" evidence="3">
    <location>
        <begin position="497"/>
        <end position="510"/>
    </location>
</feature>
<feature type="disulfide bond" evidence="3">
    <location>
        <begin position="512"/>
        <end position="521"/>
    </location>
</feature>
<feature type="disulfide bond" evidence="3">
    <location>
        <begin position="577"/>
        <end position="589"/>
    </location>
</feature>
<feature type="disulfide bond" evidence="3">
    <location>
        <begin position="583"/>
        <end position="596"/>
    </location>
</feature>
<feature type="disulfide bond" evidence="3">
    <location>
        <begin position="598"/>
        <end position="607"/>
    </location>
</feature>
<feature type="disulfide bond" evidence="3">
    <location>
        <begin position="620"/>
        <end position="634"/>
    </location>
</feature>
<feature type="disulfide bond" evidence="3">
    <location>
        <begin position="624"/>
        <end position="641"/>
    </location>
</feature>
<feature type="disulfide bond" evidence="3">
    <location>
        <begin position="643"/>
        <end position="652"/>
    </location>
</feature>
<feature type="disulfide bond" evidence="3">
    <location>
        <begin position="669"/>
        <end position="677"/>
    </location>
</feature>
<feature type="disulfide bond" evidence="3">
    <location>
        <begin position="671"/>
        <end position="684"/>
    </location>
</feature>
<feature type="disulfide bond" evidence="3">
    <location>
        <begin position="686"/>
        <end position="695"/>
    </location>
</feature>
<feature type="disulfide bond" evidence="3">
    <location>
        <begin position="712"/>
        <end position="720"/>
    </location>
</feature>
<feature type="disulfide bond" evidence="3">
    <location>
        <begin position="714"/>
        <end position="727"/>
    </location>
</feature>
<feature type="disulfide bond" evidence="3">
    <location>
        <begin position="729"/>
        <end position="738"/>
    </location>
</feature>
<feature type="disulfide bond" evidence="3">
    <location>
        <begin position="751"/>
        <end position="763"/>
    </location>
</feature>
<feature type="disulfide bond" evidence="3">
    <location>
        <begin position="757"/>
        <end position="770"/>
    </location>
</feature>
<feature type="disulfide bond" evidence="3">
    <location>
        <begin position="772"/>
        <end position="781"/>
    </location>
</feature>
<feature type="disulfide bond" evidence="3">
    <location>
        <begin position="798"/>
        <end position="806"/>
    </location>
</feature>
<feature type="disulfide bond" evidence="3">
    <location>
        <begin position="800"/>
        <end position="813"/>
    </location>
</feature>
<feature type="disulfide bond" evidence="3">
    <location>
        <begin position="815"/>
        <end position="824"/>
    </location>
</feature>
<feature type="mutagenesis site" description="Decreased survival. 4 days post-fertilization (dpf) displays significant tail bending due to severe defects in dorsal muscle integrity. Also shows a slight delay in somite formation which is restored by 3 dpf." evidence="7">
    <location>
        <begin position="110"/>
        <end position="1119"/>
    </location>
</feature>
<proteinExistence type="evidence at protein level"/>
<name>MEG10_DANRE</name>